<evidence type="ECO:0000255" key="1">
    <source>
        <dbReference type="HAMAP-Rule" id="MF_00210"/>
    </source>
</evidence>
<feature type="chain" id="PRO_1000118783" description="3-phosphoshikimate 1-carboxyvinyltransferase">
    <location>
        <begin position="1"/>
        <end position="427"/>
    </location>
</feature>
<feature type="active site" description="Proton acceptor" evidence="1">
    <location>
        <position position="313"/>
    </location>
</feature>
<feature type="binding site" evidence="1">
    <location>
        <position position="22"/>
    </location>
    <ligand>
        <name>3-phosphoshikimate</name>
        <dbReference type="ChEBI" id="CHEBI:145989"/>
    </ligand>
</feature>
<feature type="binding site" evidence="1">
    <location>
        <position position="22"/>
    </location>
    <ligand>
        <name>phosphoenolpyruvate</name>
        <dbReference type="ChEBI" id="CHEBI:58702"/>
    </ligand>
</feature>
<feature type="binding site" evidence="1">
    <location>
        <position position="23"/>
    </location>
    <ligand>
        <name>3-phosphoshikimate</name>
        <dbReference type="ChEBI" id="CHEBI:145989"/>
    </ligand>
</feature>
<feature type="binding site" evidence="1">
    <location>
        <position position="27"/>
    </location>
    <ligand>
        <name>3-phosphoshikimate</name>
        <dbReference type="ChEBI" id="CHEBI:145989"/>
    </ligand>
</feature>
<feature type="binding site" evidence="1">
    <location>
        <position position="96"/>
    </location>
    <ligand>
        <name>phosphoenolpyruvate</name>
        <dbReference type="ChEBI" id="CHEBI:58702"/>
    </ligand>
</feature>
<feature type="binding site" evidence="1">
    <location>
        <position position="124"/>
    </location>
    <ligand>
        <name>phosphoenolpyruvate</name>
        <dbReference type="ChEBI" id="CHEBI:58702"/>
    </ligand>
</feature>
<feature type="binding site" evidence="1">
    <location>
        <position position="169"/>
    </location>
    <ligand>
        <name>3-phosphoshikimate</name>
        <dbReference type="ChEBI" id="CHEBI:145989"/>
    </ligand>
</feature>
<feature type="binding site" evidence="1">
    <location>
        <position position="170"/>
    </location>
    <ligand>
        <name>3-phosphoshikimate</name>
        <dbReference type="ChEBI" id="CHEBI:145989"/>
    </ligand>
</feature>
<feature type="binding site" evidence="1">
    <location>
        <position position="171"/>
    </location>
    <ligand>
        <name>3-phosphoshikimate</name>
        <dbReference type="ChEBI" id="CHEBI:145989"/>
    </ligand>
</feature>
<feature type="binding site" evidence="1">
    <location>
        <position position="171"/>
    </location>
    <ligand>
        <name>phosphoenolpyruvate</name>
        <dbReference type="ChEBI" id="CHEBI:58702"/>
    </ligand>
</feature>
<feature type="binding site" evidence="1">
    <location>
        <position position="197"/>
    </location>
    <ligand>
        <name>3-phosphoshikimate</name>
        <dbReference type="ChEBI" id="CHEBI:145989"/>
    </ligand>
</feature>
<feature type="binding site" evidence="1">
    <location>
        <position position="313"/>
    </location>
    <ligand>
        <name>3-phosphoshikimate</name>
        <dbReference type="ChEBI" id="CHEBI:145989"/>
    </ligand>
</feature>
<feature type="binding site" evidence="1">
    <location>
        <position position="336"/>
    </location>
    <ligand>
        <name>3-phosphoshikimate</name>
        <dbReference type="ChEBI" id="CHEBI:145989"/>
    </ligand>
</feature>
<feature type="binding site" evidence="1">
    <location>
        <position position="340"/>
    </location>
    <ligand>
        <name>3-phosphoshikimate</name>
        <dbReference type="ChEBI" id="CHEBI:145989"/>
    </ligand>
</feature>
<feature type="binding site" evidence="1">
    <location>
        <position position="344"/>
    </location>
    <ligand>
        <name>phosphoenolpyruvate</name>
        <dbReference type="ChEBI" id="CHEBI:58702"/>
    </ligand>
</feature>
<feature type="binding site" evidence="1">
    <location>
        <position position="386"/>
    </location>
    <ligand>
        <name>phosphoenolpyruvate</name>
        <dbReference type="ChEBI" id="CHEBI:58702"/>
    </ligand>
</feature>
<feature type="binding site" evidence="1">
    <location>
        <position position="411"/>
    </location>
    <ligand>
        <name>phosphoenolpyruvate</name>
        <dbReference type="ChEBI" id="CHEBI:58702"/>
    </ligand>
</feature>
<sequence>MESLTLQPIARVDGTINLPGSKSVSNRALLLAALAHGKTVLTNLLDSDDVRHMLNALTALGVSYTLSADRTRCEIIGNGGPLHAEGALELFLGNAGTAMRPLAAALCLGSNDIVLTGEPRMKERPIGHLVDALRLGGAKITYLEQENYPPLRLQGGFTGGNVDVDGSVSSQFLTALLMTAPLAPEDTVIRIKGDLVSKPYIDITLNLMKTFGVEIENQHYQQFVVKGGQSYQSPGTYLVEGDASSASYFLAAAAIKGGTVKVTGIGRNSMQGDIRFADVLEKMGATICWGDDYISCTRGELNAIDMDMNHIPDAAMTIATAALFAKGTTTLRNIYNWRVKETDRLFAMATELRKVGAEVEEGHDYIRITPPEKLNFAEIATYNDHRMAMCFSLVALSDTPVTILDPKCTAKTFPDYFEQLARISQAA</sequence>
<reference key="1">
    <citation type="journal article" date="2009" name="PLoS Genet.">
        <title>Organised genome dynamics in the Escherichia coli species results in highly diverse adaptive paths.</title>
        <authorList>
            <person name="Touchon M."/>
            <person name="Hoede C."/>
            <person name="Tenaillon O."/>
            <person name="Barbe V."/>
            <person name="Baeriswyl S."/>
            <person name="Bidet P."/>
            <person name="Bingen E."/>
            <person name="Bonacorsi S."/>
            <person name="Bouchier C."/>
            <person name="Bouvet O."/>
            <person name="Calteau A."/>
            <person name="Chiapello H."/>
            <person name="Clermont O."/>
            <person name="Cruveiller S."/>
            <person name="Danchin A."/>
            <person name="Diard M."/>
            <person name="Dossat C."/>
            <person name="Karoui M.E."/>
            <person name="Frapy E."/>
            <person name="Garry L."/>
            <person name="Ghigo J.M."/>
            <person name="Gilles A.M."/>
            <person name="Johnson J."/>
            <person name="Le Bouguenec C."/>
            <person name="Lescat M."/>
            <person name="Mangenot S."/>
            <person name="Martinez-Jehanne V."/>
            <person name="Matic I."/>
            <person name="Nassif X."/>
            <person name="Oztas S."/>
            <person name="Petit M.A."/>
            <person name="Pichon C."/>
            <person name="Rouy Z."/>
            <person name="Ruf C.S."/>
            <person name="Schneider D."/>
            <person name="Tourret J."/>
            <person name="Vacherie B."/>
            <person name="Vallenet D."/>
            <person name="Medigue C."/>
            <person name="Rocha E.P.C."/>
            <person name="Denamur E."/>
        </authorList>
    </citation>
    <scope>NUCLEOTIDE SEQUENCE [LARGE SCALE GENOMIC DNA]</scope>
    <source>
        <strain>IAI1</strain>
    </source>
</reference>
<name>AROA_ECO8A</name>
<accession>B7M836</accession>
<gene>
    <name evidence="1" type="primary">aroA</name>
    <name type="ordered locus">ECIAI1_0948</name>
</gene>
<dbReference type="EC" id="2.5.1.19" evidence="1"/>
<dbReference type="EMBL" id="CU928160">
    <property type="protein sequence ID" value="CAQ97812.1"/>
    <property type="molecule type" value="Genomic_DNA"/>
</dbReference>
<dbReference type="RefSeq" id="WP_000445231.1">
    <property type="nucleotide sequence ID" value="NC_011741.1"/>
</dbReference>
<dbReference type="SMR" id="B7M836"/>
<dbReference type="GeneID" id="93776510"/>
<dbReference type="KEGG" id="ecr:ECIAI1_0948"/>
<dbReference type="HOGENOM" id="CLU_024321_0_0_6"/>
<dbReference type="UniPathway" id="UPA00053">
    <property type="reaction ID" value="UER00089"/>
</dbReference>
<dbReference type="GO" id="GO:0005737">
    <property type="term" value="C:cytoplasm"/>
    <property type="evidence" value="ECO:0007669"/>
    <property type="project" value="UniProtKB-SubCell"/>
</dbReference>
<dbReference type="GO" id="GO:0003866">
    <property type="term" value="F:3-phosphoshikimate 1-carboxyvinyltransferase activity"/>
    <property type="evidence" value="ECO:0007669"/>
    <property type="project" value="UniProtKB-UniRule"/>
</dbReference>
<dbReference type="GO" id="GO:0008652">
    <property type="term" value="P:amino acid biosynthetic process"/>
    <property type="evidence" value="ECO:0007669"/>
    <property type="project" value="UniProtKB-KW"/>
</dbReference>
<dbReference type="GO" id="GO:0009073">
    <property type="term" value="P:aromatic amino acid family biosynthetic process"/>
    <property type="evidence" value="ECO:0007669"/>
    <property type="project" value="UniProtKB-KW"/>
</dbReference>
<dbReference type="GO" id="GO:0009423">
    <property type="term" value="P:chorismate biosynthetic process"/>
    <property type="evidence" value="ECO:0007669"/>
    <property type="project" value="UniProtKB-UniRule"/>
</dbReference>
<dbReference type="CDD" id="cd01554">
    <property type="entry name" value="EPT-like"/>
    <property type="match status" value="1"/>
</dbReference>
<dbReference type="FunFam" id="3.65.10.10:FF:000003">
    <property type="entry name" value="3-phosphoshikimate 1-carboxyvinyltransferase"/>
    <property type="match status" value="1"/>
</dbReference>
<dbReference type="FunFam" id="3.65.10.10:FF:000004">
    <property type="entry name" value="3-phosphoshikimate 1-carboxyvinyltransferase"/>
    <property type="match status" value="1"/>
</dbReference>
<dbReference type="Gene3D" id="3.65.10.10">
    <property type="entry name" value="Enolpyruvate transferase domain"/>
    <property type="match status" value="2"/>
</dbReference>
<dbReference type="HAMAP" id="MF_00210">
    <property type="entry name" value="EPSP_synth"/>
    <property type="match status" value="1"/>
</dbReference>
<dbReference type="InterPro" id="IPR001986">
    <property type="entry name" value="Enolpyruvate_Tfrase_dom"/>
</dbReference>
<dbReference type="InterPro" id="IPR036968">
    <property type="entry name" value="Enolpyruvate_Tfrase_sf"/>
</dbReference>
<dbReference type="InterPro" id="IPR006264">
    <property type="entry name" value="EPSP_synthase"/>
</dbReference>
<dbReference type="InterPro" id="IPR023193">
    <property type="entry name" value="EPSP_synthase_CS"/>
</dbReference>
<dbReference type="InterPro" id="IPR013792">
    <property type="entry name" value="RNA3'P_cycl/enolpyr_Trfase_a/b"/>
</dbReference>
<dbReference type="NCBIfam" id="TIGR01356">
    <property type="entry name" value="aroA"/>
    <property type="match status" value="1"/>
</dbReference>
<dbReference type="PANTHER" id="PTHR21090">
    <property type="entry name" value="AROM/DEHYDROQUINATE SYNTHASE"/>
    <property type="match status" value="1"/>
</dbReference>
<dbReference type="PANTHER" id="PTHR21090:SF5">
    <property type="entry name" value="PENTAFUNCTIONAL AROM POLYPEPTIDE"/>
    <property type="match status" value="1"/>
</dbReference>
<dbReference type="Pfam" id="PF00275">
    <property type="entry name" value="EPSP_synthase"/>
    <property type="match status" value="1"/>
</dbReference>
<dbReference type="PIRSF" id="PIRSF000505">
    <property type="entry name" value="EPSPS"/>
    <property type="match status" value="1"/>
</dbReference>
<dbReference type="SUPFAM" id="SSF55205">
    <property type="entry name" value="EPT/RTPC-like"/>
    <property type="match status" value="1"/>
</dbReference>
<dbReference type="PROSITE" id="PS00104">
    <property type="entry name" value="EPSP_SYNTHASE_1"/>
    <property type="match status" value="1"/>
</dbReference>
<dbReference type="PROSITE" id="PS00885">
    <property type="entry name" value="EPSP_SYNTHASE_2"/>
    <property type="match status" value="1"/>
</dbReference>
<comment type="function">
    <text evidence="1">Catalyzes the transfer of the enolpyruvyl moiety of phosphoenolpyruvate (PEP) to the 5-hydroxyl of shikimate-3-phosphate (S3P) to produce enolpyruvyl shikimate-3-phosphate and inorganic phosphate.</text>
</comment>
<comment type="catalytic activity">
    <reaction evidence="1">
        <text>3-phosphoshikimate + phosphoenolpyruvate = 5-O-(1-carboxyvinyl)-3-phosphoshikimate + phosphate</text>
        <dbReference type="Rhea" id="RHEA:21256"/>
        <dbReference type="ChEBI" id="CHEBI:43474"/>
        <dbReference type="ChEBI" id="CHEBI:57701"/>
        <dbReference type="ChEBI" id="CHEBI:58702"/>
        <dbReference type="ChEBI" id="CHEBI:145989"/>
        <dbReference type="EC" id="2.5.1.19"/>
    </reaction>
    <physiologicalReaction direction="left-to-right" evidence="1">
        <dbReference type="Rhea" id="RHEA:21257"/>
    </physiologicalReaction>
</comment>
<comment type="pathway">
    <text evidence="1">Metabolic intermediate biosynthesis; chorismate biosynthesis; chorismate from D-erythrose 4-phosphate and phosphoenolpyruvate: step 6/7.</text>
</comment>
<comment type="subunit">
    <text evidence="1">Monomer.</text>
</comment>
<comment type="subcellular location">
    <subcellularLocation>
        <location evidence="1">Cytoplasm</location>
    </subcellularLocation>
</comment>
<comment type="similarity">
    <text evidence="1">Belongs to the EPSP synthase family.</text>
</comment>
<protein>
    <recommendedName>
        <fullName evidence="1">3-phosphoshikimate 1-carboxyvinyltransferase</fullName>
        <ecNumber evidence="1">2.5.1.19</ecNumber>
    </recommendedName>
    <alternativeName>
        <fullName evidence="1">5-enolpyruvylshikimate-3-phosphate synthase</fullName>
        <shortName evidence="1">EPSP synthase</shortName>
        <shortName evidence="1">EPSPS</shortName>
    </alternativeName>
</protein>
<organism>
    <name type="scientific">Escherichia coli O8 (strain IAI1)</name>
    <dbReference type="NCBI Taxonomy" id="585034"/>
    <lineage>
        <taxon>Bacteria</taxon>
        <taxon>Pseudomonadati</taxon>
        <taxon>Pseudomonadota</taxon>
        <taxon>Gammaproteobacteria</taxon>
        <taxon>Enterobacterales</taxon>
        <taxon>Enterobacteriaceae</taxon>
        <taxon>Escherichia</taxon>
    </lineage>
</organism>
<keyword id="KW-0028">Amino-acid biosynthesis</keyword>
<keyword id="KW-0057">Aromatic amino acid biosynthesis</keyword>
<keyword id="KW-0963">Cytoplasm</keyword>
<keyword id="KW-0808">Transferase</keyword>
<proteinExistence type="inferred from homology"/>